<organism>
    <name type="scientific">Helicobacter pylori (strain ATCC 700392 / 26695)</name>
    <name type="common">Campylobacter pylori</name>
    <dbReference type="NCBI Taxonomy" id="85962"/>
    <lineage>
        <taxon>Bacteria</taxon>
        <taxon>Pseudomonadati</taxon>
        <taxon>Campylobacterota</taxon>
        <taxon>Epsilonproteobacteria</taxon>
        <taxon>Campylobacterales</taxon>
        <taxon>Helicobacteraceae</taxon>
        <taxon>Helicobacter</taxon>
    </lineage>
</organism>
<accession>O25868</accession>
<dbReference type="EC" id="4.1.3.27"/>
<dbReference type="EMBL" id="AE000511">
    <property type="protein sequence ID" value="AAD08325.1"/>
    <property type="molecule type" value="Genomic_DNA"/>
</dbReference>
<dbReference type="PIR" id="A64680">
    <property type="entry name" value="A64680"/>
</dbReference>
<dbReference type="RefSeq" id="NP_208073.1">
    <property type="nucleotide sequence ID" value="NC_000915.1"/>
</dbReference>
<dbReference type="RefSeq" id="WP_000688223.1">
    <property type="nucleotide sequence ID" value="NC_018939.1"/>
</dbReference>
<dbReference type="SMR" id="O25868"/>
<dbReference type="FunCoup" id="O25868">
    <property type="interactions" value="188"/>
</dbReference>
<dbReference type="IntAct" id="O25868">
    <property type="interactions" value="1"/>
</dbReference>
<dbReference type="STRING" id="85962.HP_1281"/>
<dbReference type="MEROPS" id="C26.960"/>
<dbReference type="PaxDb" id="85962-C694_06620"/>
<dbReference type="EnsemblBacteria" id="AAD08325">
    <property type="protein sequence ID" value="AAD08325"/>
    <property type="gene ID" value="HP_1281"/>
</dbReference>
<dbReference type="KEGG" id="heo:C694_06620"/>
<dbReference type="KEGG" id="hpy:HP_1281"/>
<dbReference type="PATRIC" id="fig|85962.47.peg.1374"/>
<dbReference type="eggNOG" id="COG0512">
    <property type="taxonomic scope" value="Bacteria"/>
</dbReference>
<dbReference type="InParanoid" id="O25868"/>
<dbReference type="OrthoDB" id="9786812at2"/>
<dbReference type="PhylomeDB" id="O25868"/>
<dbReference type="UniPathway" id="UPA00035">
    <property type="reaction ID" value="UER00040"/>
</dbReference>
<dbReference type="Proteomes" id="UP000000429">
    <property type="component" value="Chromosome"/>
</dbReference>
<dbReference type="GO" id="GO:0004049">
    <property type="term" value="F:anthranilate synthase activity"/>
    <property type="evidence" value="ECO:0007669"/>
    <property type="project" value="UniProtKB-EC"/>
</dbReference>
<dbReference type="GO" id="GO:0000162">
    <property type="term" value="P:L-tryptophan biosynthetic process"/>
    <property type="evidence" value="ECO:0000318"/>
    <property type="project" value="GO_Central"/>
</dbReference>
<dbReference type="CDD" id="cd01743">
    <property type="entry name" value="GATase1_Anthranilate_Synthase"/>
    <property type="match status" value="1"/>
</dbReference>
<dbReference type="FunFam" id="3.40.50.880:FF:000003">
    <property type="entry name" value="Anthranilate synthase component II"/>
    <property type="match status" value="1"/>
</dbReference>
<dbReference type="Gene3D" id="3.40.50.880">
    <property type="match status" value="1"/>
</dbReference>
<dbReference type="InterPro" id="IPR050472">
    <property type="entry name" value="Anth_synth/Amidotransfase"/>
</dbReference>
<dbReference type="InterPro" id="IPR029062">
    <property type="entry name" value="Class_I_gatase-like"/>
</dbReference>
<dbReference type="InterPro" id="IPR017926">
    <property type="entry name" value="GATASE"/>
</dbReference>
<dbReference type="InterPro" id="IPR006221">
    <property type="entry name" value="TrpG/PapA_dom"/>
</dbReference>
<dbReference type="NCBIfam" id="TIGR00566">
    <property type="entry name" value="trpG_papA"/>
    <property type="match status" value="1"/>
</dbReference>
<dbReference type="PANTHER" id="PTHR43418:SF4">
    <property type="entry name" value="MULTIFUNCTIONAL TRYPTOPHAN BIOSYNTHESIS PROTEIN"/>
    <property type="match status" value="1"/>
</dbReference>
<dbReference type="PANTHER" id="PTHR43418">
    <property type="entry name" value="MULTIFUNCTIONAL TRYPTOPHAN BIOSYNTHESIS PROTEIN-RELATED"/>
    <property type="match status" value="1"/>
</dbReference>
<dbReference type="Pfam" id="PF00117">
    <property type="entry name" value="GATase"/>
    <property type="match status" value="1"/>
</dbReference>
<dbReference type="PRINTS" id="PR00097">
    <property type="entry name" value="ANTSNTHASEII"/>
</dbReference>
<dbReference type="PRINTS" id="PR00099">
    <property type="entry name" value="CPSGATASE"/>
</dbReference>
<dbReference type="PRINTS" id="PR00096">
    <property type="entry name" value="GATASE"/>
</dbReference>
<dbReference type="SUPFAM" id="SSF52317">
    <property type="entry name" value="Class I glutamine amidotransferase-like"/>
    <property type="match status" value="1"/>
</dbReference>
<dbReference type="PROSITE" id="PS51273">
    <property type="entry name" value="GATASE_TYPE_1"/>
    <property type="match status" value="1"/>
</dbReference>
<keyword id="KW-0028">Amino-acid biosynthesis</keyword>
<keyword id="KW-0057">Aromatic amino acid biosynthesis</keyword>
<keyword id="KW-0315">Glutamine amidotransferase</keyword>
<keyword id="KW-0456">Lyase</keyword>
<keyword id="KW-1185">Reference proteome</keyword>
<keyword id="KW-0822">Tryptophan biosynthesis</keyword>
<feature type="chain" id="PRO_0000056884" description="Anthranilate synthase component 2">
    <location>
        <begin position="1"/>
        <end position="194"/>
    </location>
</feature>
<feature type="domain" description="Glutamine amidotransferase type-1" evidence="3">
    <location>
        <begin position="2"/>
        <end position="194"/>
    </location>
</feature>
<feature type="active site" description="Nucleophile; for GATase activity" evidence="3">
    <location>
        <position position="84"/>
    </location>
</feature>
<feature type="active site" description="For GATase activity" evidence="3">
    <location>
        <position position="170"/>
    </location>
</feature>
<feature type="active site" description="For GATase activity" evidence="3">
    <location>
        <position position="172"/>
    </location>
</feature>
<feature type="binding site" evidence="2">
    <location>
        <begin position="57"/>
        <end position="59"/>
    </location>
    <ligand>
        <name>L-glutamine</name>
        <dbReference type="ChEBI" id="CHEBI:58359"/>
    </ligand>
</feature>
<feature type="binding site" evidence="2">
    <location>
        <position position="88"/>
    </location>
    <ligand>
        <name>L-glutamine</name>
        <dbReference type="ChEBI" id="CHEBI:58359"/>
    </ligand>
</feature>
<feature type="binding site" evidence="2">
    <location>
        <begin position="134"/>
        <end position="135"/>
    </location>
    <ligand>
        <name>L-glutamine</name>
        <dbReference type="ChEBI" id="CHEBI:58359"/>
    </ligand>
</feature>
<sequence length="194" mass="21438">MKIFFIDNFDSFSYNLVYELECLGYEVAVYQNDIDPSYLMDLMNEESKTPLLFISPGPGNPNSSGNLLKIIAMAKKKFPILGICLGLQALAQSYGAKIIRSKEIVHGKATAIALKKHAVFKGLGESMVVGRYHSLMASGLPKNLEVIAEHDNIPMAIVNEEDKILAYQFHPESIMTLQGRALLEQSVGFLEGLL</sequence>
<comment type="function">
    <text evidence="1">Part of a heterotetrameric complex that catalyzes the two-step biosynthesis of anthranilate, an intermediate in the biosynthesis of L-tryptophan. In the first step, the glutamine-binding beta subunit (TrpG) of anthranilate synthase (AS) provides the glutamine amidotransferase activity which generates ammonia as a substrate that, along with chorismate, is used in the second step, catalyzed by the large alpha subunit of AS (TrpE) to produce anthranilate. In the absence of TrpG, TrpE can synthesize anthranilate directly from chorismate and high concentrations of ammonia (By similarity).</text>
</comment>
<comment type="catalytic activity">
    <reaction>
        <text>chorismate + L-glutamine = anthranilate + pyruvate + L-glutamate + H(+)</text>
        <dbReference type="Rhea" id="RHEA:21732"/>
        <dbReference type="ChEBI" id="CHEBI:15361"/>
        <dbReference type="ChEBI" id="CHEBI:15378"/>
        <dbReference type="ChEBI" id="CHEBI:16567"/>
        <dbReference type="ChEBI" id="CHEBI:29748"/>
        <dbReference type="ChEBI" id="CHEBI:29985"/>
        <dbReference type="ChEBI" id="CHEBI:58359"/>
        <dbReference type="EC" id="4.1.3.27"/>
    </reaction>
</comment>
<comment type="pathway">
    <text>Amino-acid biosynthesis; L-tryptophan biosynthesis; L-tryptophan from chorismate: step 1/5.</text>
</comment>
<comment type="subunit">
    <text evidence="1">Heterotetramer consisting of two non-identical subunits: a beta subunit (TrpG) and a large alpha subunit (TrpE).</text>
</comment>
<gene>
    <name type="primary">trpG</name>
    <name type="ordered locus">HP_1281</name>
</gene>
<evidence type="ECO:0000250" key="1"/>
<evidence type="ECO:0000250" key="2">
    <source>
        <dbReference type="UniProtKB" id="P00900"/>
    </source>
</evidence>
<evidence type="ECO:0000255" key="3">
    <source>
        <dbReference type="PROSITE-ProRule" id="PRU00605"/>
    </source>
</evidence>
<protein>
    <recommendedName>
        <fullName>Anthranilate synthase component 2</fullName>
        <shortName>AS</shortName>
        <shortName>ASII</shortName>
        <ecNumber>4.1.3.27</ecNumber>
    </recommendedName>
    <alternativeName>
        <fullName>Anthranilate synthase, GATase component</fullName>
    </alternativeName>
    <alternativeName>
        <fullName>Anthranilate synthase, glutamine amidotransferase component</fullName>
    </alternativeName>
</protein>
<name>TRPG_HELPY</name>
<reference key="1">
    <citation type="journal article" date="1997" name="Nature">
        <title>The complete genome sequence of the gastric pathogen Helicobacter pylori.</title>
        <authorList>
            <person name="Tomb J.-F."/>
            <person name="White O."/>
            <person name="Kerlavage A.R."/>
            <person name="Clayton R.A."/>
            <person name="Sutton G.G."/>
            <person name="Fleischmann R.D."/>
            <person name="Ketchum K.A."/>
            <person name="Klenk H.-P."/>
            <person name="Gill S.R."/>
            <person name="Dougherty B.A."/>
            <person name="Nelson K.E."/>
            <person name="Quackenbush J."/>
            <person name="Zhou L."/>
            <person name="Kirkness E.F."/>
            <person name="Peterson S.N."/>
            <person name="Loftus B.J."/>
            <person name="Richardson D.L."/>
            <person name="Dodson R.J."/>
            <person name="Khalak H.G."/>
            <person name="Glodek A."/>
            <person name="McKenney K."/>
            <person name="FitzGerald L.M."/>
            <person name="Lee N."/>
            <person name="Adams M.D."/>
            <person name="Hickey E.K."/>
            <person name="Berg D.E."/>
            <person name="Gocayne J.D."/>
            <person name="Utterback T.R."/>
            <person name="Peterson J.D."/>
            <person name="Kelley J.M."/>
            <person name="Cotton M.D."/>
            <person name="Weidman J.F."/>
            <person name="Fujii C."/>
            <person name="Bowman C."/>
            <person name="Watthey L."/>
            <person name="Wallin E."/>
            <person name="Hayes W.S."/>
            <person name="Borodovsky M."/>
            <person name="Karp P.D."/>
            <person name="Smith H.O."/>
            <person name="Fraser C.M."/>
            <person name="Venter J.C."/>
        </authorList>
    </citation>
    <scope>NUCLEOTIDE SEQUENCE [LARGE SCALE GENOMIC DNA]</scope>
    <source>
        <strain>ATCC 700392 / 26695</strain>
    </source>
</reference>
<proteinExistence type="inferred from homology"/>